<accession>Q8DJE6</accession>
<feature type="chain" id="PRO_0000176857" description="Small ribosomal subunit protein bS6">
    <location>
        <begin position="1"/>
        <end position="114"/>
    </location>
</feature>
<proteinExistence type="inferred from homology"/>
<comment type="function">
    <text evidence="1">Binds together with bS18 to 16S ribosomal RNA.</text>
</comment>
<comment type="similarity">
    <text evidence="1">Belongs to the bacterial ribosomal protein bS6 family.</text>
</comment>
<sequence>MITRNYETLYIIRPDVGEEQLEQTISQFRTFLEEQGATKLKVQNRGKRRFAYPIKKLREGYYILMTYTAPGTAIAPLERAMRLNENILRFMTIVLEEETETEDAEEENPVLARA</sequence>
<protein>
    <recommendedName>
        <fullName evidence="1">Small ribosomal subunit protein bS6</fullName>
    </recommendedName>
    <alternativeName>
        <fullName evidence="2">30S ribosomal protein S6</fullName>
    </alternativeName>
</protein>
<gene>
    <name evidence="1" type="primary">rpsF</name>
    <name evidence="1" type="synonym">rps6</name>
    <name type="ordered locus">tlr1279</name>
</gene>
<reference key="1">
    <citation type="journal article" date="2002" name="DNA Res.">
        <title>Complete genome structure of the thermophilic cyanobacterium Thermosynechococcus elongatus BP-1.</title>
        <authorList>
            <person name="Nakamura Y."/>
            <person name="Kaneko T."/>
            <person name="Sato S."/>
            <person name="Ikeuchi M."/>
            <person name="Katoh H."/>
            <person name="Sasamoto S."/>
            <person name="Watanabe A."/>
            <person name="Iriguchi M."/>
            <person name="Kawashima K."/>
            <person name="Kimura T."/>
            <person name="Kishida Y."/>
            <person name="Kiyokawa C."/>
            <person name="Kohara M."/>
            <person name="Matsumoto M."/>
            <person name="Matsuno A."/>
            <person name="Nakazaki N."/>
            <person name="Shimpo S."/>
            <person name="Sugimoto M."/>
            <person name="Takeuchi C."/>
            <person name="Yamada M."/>
            <person name="Tabata S."/>
        </authorList>
    </citation>
    <scope>NUCLEOTIDE SEQUENCE [LARGE SCALE GENOMIC DNA]</scope>
    <source>
        <strain>NIES-2133 / IAM M-273 / BP-1</strain>
    </source>
</reference>
<evidence type="ECO:0000255" key="1">
    <source>
        <dbReference type="HAMAP-Rule" id="MF_00360"/>
    </source>
</evidence>
<evidence type="ECO:0000305" key="2"/>
<organism>
    <name type="scientific">Thermosynechococcus vestitus (strain NIES-2133 / IAM M-273 / BP-1)</name>
    <dbReference type="NCBI Taxonomy" id="197221"/>
    <lineage>
        <taxon>Bacteria</taxon>
        <taxon>Bacillati</taxon>
        <taxon>Cyanobacteriota</taxon>
        <taxon>Cyanophyceae</taxon>
        <taxon>Acaryochloridales</taxon>
        <taxon>Thermosynechococcaceae</taxon>
        <taxon>Thermosynechococcus</taxon>
    </lineage>
</organism>
<name>RS6_THEVB</name>
<dbReference type="EMBL" id="BA000039">
    <property type="protein sequence ID" value="BAC08831.1"/>
    <property type="molecule type" value="Genomic_DNA"/>
</dbReference>
<dbReference type="RefSeq" id="NP_682069.1">
    <property type="nucleotide sequence ID" value="NC_004113.1"/>
</dbReference>
<dbReference type="RefSeq" id="WP_011057119.1">
    <property type="nucleotide sequence ID" value="NC_004113.1"/>
</dbReference>
<dbReference type="SMR" id="Q8DJE6"/>
<dbReference type="STRING" id="197221.gene:10747875"/>
<dbReference type="EnsemblBacteria" id="BAC08831">
    <property type="protein sequence ID" value="BAC08831"/>
    <property type="gene ID" value="BAC08831"/>
</dbReference>
<dbReference type="KEGG" id="tel:tlr1279"/>
<dbReference type="PATRIC" id="fig|197221.4.peg.1346"/>
<dbReference type="eggNOG" id="COG0360">
    <property type="taxonomic scope" value="Bacteria"/>
</dbReference>
<dbReference type="Proteomes" id="UP000000440">
    <property type="component" value="Chromosome"/>
</dbReference>
<dbReference type="GO" id="GO:0005737">
    <property type="term" value="C:cytoplasm"/>
    <property type="evidence" value="ECO:0007669"/>
    <property type="project" value="UniProtKB-ARBA"/>
</dbReference>
<dbReference type="GO" id="GO:1990904">
    <property type="term" value="C:ribonucleoprotein complex"/>
    <property type="evidence" value="ECO:0007669"/>
    <property type="project" value="UniProtKB-KW"/>
</dbReference>
<dbReference type="GO" id="GO:0005840">
    <property type="term" value="C:ribosome"/>
    <property type="evidence" value="ECO:0007669"/>
    <property type="project" value="UniProtKB-KW"/>
</dbReference>
<dbReference type="GO" id="GO:0070181">
    <property type="term" value="F:small ribosomal subunit rRNA binding"/>
    <property type="evidence" value="ECO:0007669"/>
    <property type="project" value="TreeGrafter"/>
</dbReference>
<dbReference type="GO" id="GO:0003735">
    <property type="term" value="F:structural constituent of ribosome"/>
    <property type="evidence" value="ECO:0007669"/>
    <property type="project" value="InterPro"/>
</dbReference>
<dbReference type="GO" id="GO:0006412">
    <property type="term" value="P:translation"/>
    <property type="evidence" value="ECO:0007669"/>
    <property type="project" value="UniProtKB-UniRule"/>
</dbReference>
<dbReference type="CDD" id="cd15487">
    <property type="entry name" value="bS6_chloro_cyano"/>
    <property type="match status" value="1"/>
</dbReference>
<dbReference type="Gene3D" id="3.30.70.60">
    <property type="match status" value="1"/>
</dbReference>
<dbReference type="HAMAP" id="MF_00360">
    <property type="entry name" value="Ribosomal_bS6"/>
    <property type="match status" value="1"/>
</dbReference>
<dbReference type="InterPro" id="IPR000529">
    <property type="entry name" value="Ribosomal_bS6"/>
</dbReference>
<dbReference type="InterPro" id="IPR035980">
    <property type="entry name" value="Ribosomal_bS6_sf"/>
</dbReference>
<dbReference type="InterPro" id="IPR020814">
    <property type="entry name" value="Ribosomal_S6_plastid/chlpt"/>
</dbReference>
<dbReference type="InterPro" id="IPR014717">
    <property type="entry name" value="Transl_elong_EF1B/ribsomal_bS6"/>
</dbReference>
<dbReference type="NCBIfam" id="TIGR00166">
    <property type="entry name" value="S6"/>
    <property type="match status" value="1"/>
</dbReference>
<dbReference type="PANTHER" id="PTHR21011">
    <property type="entry name" value="MITOCHONDRIAL 28S RIBOSOMAL PROTEIN S6"/>
    <property type="match status" value="1"/>
</dbReference>
<dbReference type="PANTHER" id="PTHR21011:SF1">
    <property type="entry name" value="SMALL RIBOSOMAL SUBUNIT PROTEIN BS6M"/>
    <property type="match status" value="1"/>
</dbReference>
<dbReference type="Pfam" id="PF01250">
    <property type="entry name" value="Ribosomal_S6"/>
    <property type="match status" value="1"/>
</dbReference>
<dbReference type="SUPFAM" id="SSF54995">
    <property type="entry name" value="Ribosomal protein S6"/>
    <property type="match status" value="1"/>
</dbReference>
<keyword id="KW-1185">Reference proteome</keyword>
<keyword id="KW-0687">Ribonucleoprotein</keyword>
<keyword id="KW-0689">Ribosomal protein</keyword>
<keyword id="KW-0694">RNA-binding</keyword>
<keyword id="KW-0699">rRNA-binding</keyword>